<name>NRDR_ENT38</name>
<comment type="function">
    <text evidence="1">Negatively regulates transcription of bacterial ribonucleotide reductase nrd genes and operons by binding to NrdR-boxes.</text>
</comment>
<comment type="cofactor">
    <cofactor evidence="1">
        <name>Zn(2+)</name>
        <dbReference type="ChEBI" id="CHEBI:29105"/>
    </cofactor>
    <text evidence="1">Binds 1 zinc ion.</text>
</comment>
<comment type="similarity">
    <text evidence="1">Belongs to the NrdR family.</text>
</comment>
<gene>
    <name evidence="1" type="primary">nrdR</name>
    <name type="ordered locus">Ent638_0881</name>
</gene>
<evidence type="ECO:0000255" key="1">
    <source>
        <dbReference type="HAMAP-Rule" id="MF_00440"/>
    </source>
</evidence>
<keyword id="KW-0067">ATP-binding</keyword>
<keyword id="KW-0238">DNA-binding</keyword>
<keyword id="KW-0479">Metal-binding</keyword>
<keyword id="KW-0547">Nucleotide-binding</keyword>
<keyword id="KW-0678">Repressor</keyword>
<keyword id="KW-0804">Transcription</keyword>
<keyword id="KW-0805">Transcription regulation</keyword>
<keyword id="KW-0862">Zinc</keyword>
<keyword id="KW-0863">Zinc-finger</keyword>
<accession>A4W785</accession>
<feature type="chain" id="PRO_1000080749" description="Transcriptional repressor NrdR">
    <location>
        <begin position="1"/>
        <end position="149"/>
    </location>
</feature>
<feature type="domain" description="ATP-cone" evidence="1">
    <location>
        <begin position="49"/>
        <end position="139"/>
    </location>
</feature>
<feature type="zinc finger region" evidence="1">
    <location>
        <begin position="3"/>
        <end position="34"/>
    </location>
</feature>
<sequence>MHCPFCSAVDTKVIDSRLVGEGSSVRRRRQCLVCNERFTTFEVAELVMPRVVKSNDVREPFNEEKLRKGMLKALEKRPVSADDVEMALNHIKSYLRGTGEREVPSKMIGNLVMEQLKKLDKVAYIRFASVYRSFEDIKEFGEEIARLQD</sequence>
<proteinExistence type="inferred from homology"/>
<dbReference type="EMBL" id="CP000653">
    <property type="protein sequence ID" value="ABP59565.1"/>
    <property type="molecule type" value="Genomic_DNA"/>
</dbReference>
<dbReference type="RefSeq" id="WP_012016286.1">
    <property type="nucleotide sequence ID" value="NC_009436.1"/>
</dbReference>
<dbReference type="SMR" id="A4W785"/>
<dbReference type="STRING" id="399742.Ent638_0881"/>
<dbReference type="KEGG" id="ent:Ent638_0881"/>
<dbReference type="eggNOG" id="COG1327">
    <property type="taxonomic scope" value="Bacteria"/>
</dbReference>
<dbReference type="HOGENOM" id="CLU_108412_0_0_6"/>
<dbReference type="OrthoDB" id="9807461at2"/>
<dbReference type="Proteomes" id="UP000000230">
    <property type="component" value="Chromosome"/>
</dbReference>
<dbReference type="GO" id="GO:0005524">
    <property type="term" value="F:ATP binding"/>
    <property type="evidence" value="ECO:0007669"/>
    <property type="project" value="UniProtKB-KW"/>
</dbReference>
<dbReference type="GO" id="GO:0003677">
    <property type="term" value="F:DNA binding"/>
    <property type="evidence" value="ECO:0007669"/>
    <property type="project" value="UniProtKB-KW"/>
</dbReference>
<dbReference type="GO" id="GO:0008270">
    <property type="term" value="F:zinc ion binding"/>
    <property type="evidence" value="ECO:0007669"/>
    <property type="project" value="UniProtKB-UniRule"/>
</dbReference>
<dbReference type="GO" id="GO:0045892">
    <property type="term" value="P:negative regulation of DNA-templated transcription"/>
    <property type="evidence" value="ECO:0007669"/>
    <property type="project" value="UniProtKB-UniRule"/>
</dbReference>
<dbReference type="HAMAP" id="MF_00440">
    <property type="entry name" value="NrdR"/>
    <property type="match status" value="1"/>
</dbReference>
<dbReference type="InterPro" id="IPR005144">
    <property type="entry name" value="ATP-cone_dom"/>
</dbReference>
<dbReference type="InterPro" id="IPR055173">
    <property type="entry name" value="NrdR-like_N"/>
</dbReference>
<dbReference type="InterPro" id="IPR003796">
    <property type="entry name" value="RNR_NrdR-like"/>
</dbReference>
<dbReference type="NCBIfam" id="TIGR00244">
    <property type="entry name" value="transcriptional regulator NrdR"/>
    <property type="match status" value="1"/>
</dbReference>
<dbReference type="PANTHER" id="PTHR30455">
    <property type="entry name" value="TRANSCRIPTIONAL REPRESSOR NRDR"/>
    <property type="match status" value="1"/>
</dbReference>
<dbReference type="PANTHER" id="PTHR30455:SF2">
    <property type="entry name" value="TRANSCRIPTIONAL REPRESSOR NRDR"/>
    <property type="match status" value="1"/>
</dbReference>
<dbReference type="Pfam" id="PF03477">
    <property type="entry name" value="ATP-cone"/>
    <property type="match status" value="1"/>
</dbReference>
<dbReference type="Pfam" id="PF22811">
    <property type="entry name" value="Zn_ribbon_NrdR"/>
    <property type="match status" value="1"/>
</dbReference>
<dbReference type="PROSITE" id="PS51161">
    <property type="entry name" value="ATP_CONE"/>
    <property type="match status" value="1"/>
</dbReference>
<protein>
    <recommendedName>
        <fullName evidence="1">Transcriptional repressor NrdR</fullName>
    </recommendedName>
</protein>
<organism>
    <name type="scientific">Enterobacter sp. (strain 638)</name>
    <dbReference type="NCBI Taxonomy" id="399742"/>
    <lineage>
        <taxon>Bacteria</taxon>
        <taxon>Pseudomonadati</taxon>
        <taxon>Pseudomonadota</taxon>
        <taxon>Gammaproteobacteria</taxon>
        <taxon>Enterobacterales</taxon>
        <taxon>Enterobacteriaceae</taxon>
        <taxon>Enterobacter</taxon>
    </lineage>
</organism>
<reference key="1">
    <citation type="journal article" date="2010" name="PLoS Genet.">
        <title>Genome sequence of the plant growth promoting endophytic bacterium Enterobacter sp. 638.</title>
        <authorList>
            <person name="Taghavi S."/>
            <person name="van der Lelie D."/>
            <person name="Hoffman A."/>
            <person name="Zhang Y.B."/>
            <person name="Walla M.D."/>
            <person name="Vangronsveld J."/>
            <person name="Newman L."/>
            <person name="Monchy S."/>
        </authorList>
    </citation>
    <scope>NUCLEOTIDE SEQUENCE [LARGE SCALE GENOMIC DNA]</scope>
    <source>
        <strain>638</strain>
    </source>
</reference>